<comment type="function">
    <text evidence="1">With S4 and S12 plays an important role in translational accuracy.</text>
</comment>
<comment type="function">
    <text evidence="1">Located at the back of the 30S subunit body where it stabilizes the conformation of the head with respect to the body.</text>
</comment>
<comment type="subunit">
    <text evidence="1">Part of the 30S ribosomal subunit. Contacts proteins S4 and S8.</text>
</comment>
<comment type="domain">
    <text>The N-terminal domain interacts with the head of the 30S subunit; the C-terminal domain interacts with the body and contacts protein S4. The interaction surface between S4 and S5 is involved in control of translational fidelity.</text>
</comment>
<comment type="similarity">
    <text evidence="1">Belongs to the universal ribosomal protein uS5 family.</text>
</comment>
<dbReference type="EMBL" id="CP001196">
    <property type="protein sequence ID" value="ACI92822.1"/>
    <property type="molecule type" value="Genomic_DNA"/>
</dbReference>
<dbReference type="EMBL" id="CP002826">
    <property type="protein sequence ID" value="AEI07013.1"/>
    <property type="molecule type" value="Genomic_DNA"/>
</dbReference>
<dbReference type="RefSeq" id="WP_012562851.1">
    <property type="nucleotide sequence ID" value="NC_015684.1"/>
</dbReference>
<dbReference type="SMR" id="B6JEY2"/>
<dbReference type="STRING" id="504832.OCA5_c23130"/>
<dbReference type="KEGG" id="oca:OCAR_5694"/>
<dbReference type="KEGG" id="ocg:OCA5_c23130"/>
<dbReference type="PATRIC" id="fig|504832.7.peg.2438"/>
<dbReference type="eggNOG" id="COG0098">
    <property type="taxonomic scope" value="Bacteria"/>
</dbReference>
<dbReference type="HOGENOM" id="CLU_065898_2_2_5"/>
<dbReference type="OrthoDB" id="9809045at2"/>
<dbReference type="Proteomes" id="UP000007730">
    <property type="component" value="Chromosome"/>
</dbReference>
<dbReference type="GO" id="GO:0015935">
    <property type="term" value="C:small ribosomal subunit"/>
    <property type="evidence" value="ECO:0007669"/>
    <property type="project" value="InterPro"/>
</dbReference>
<dbReference type="GO" id="GO:0019843">
    <property type="term" value="F:rRNA binding"/>
    <property type="evidence" value="ECO:0007669"/>
    <property type="project" value="UniProtKB-UniRule"/>
</dbReference>
<dbReference type="GO" id="GO:0003735">
    <property type="term" value="F:structural constituent of ribosome"/>
    <property type="evidence" value="ECO:0007669"/>
    <property type="project" value="InterPro"/>
</dbReference>
<dbReference type="GO" id="GO:0006412">
    <property type="term" value="P:translation"/>
    <property type="evidence" value="ECO:0007669"/>
    <property type="project" value="UniProtKB-UniRule"/>
</dbReference>
<dbReference type="FunFam" id="3.30.160.20:FF:000001">
    <property type="entry name" value="30S ribosomal protein S5"/>
    <property type="match status" value="1"/>
</dbReference>
<dbReference type="FunFam" id="3.30.230.10:FF:000002">
    <property type="entry name" value="30S ribosomal protein S5"/>
    <property type="match status" value="1"/>
</dbReference>
<dbReference type="Gene3D" id="3.30.160.20">
    <property type="match status" value="1"/>
</dbReference>
<dbReference type="Gene3D" id="3.30.230.10">
    <property type="match status" value="1"/>
</dbReference>
<dbReference type="HAMAP" id="MF_01307_B">
    <property type="entry name" value="Ribosomal_uS5_B"/>
    <property type="match status" value="1"/>
</dbReference>
<dbReference type="InterPro" id="IPR020568">
    <property type="entry name" value="Ribosomal_Su5_D2-typ_SF"/>
</dbReference>
<dbReference type="InterPro" id="IPR000851">
    <property type="entry name" value="Ribosomal_uS5"/>
</dbReference>
<dbReference type="InterPro" id="IPR005712">
    <property type="entry name" value="Ribosomal_uS5_bac-type"/>
</dbReference>
<dbReference type="InterPro" id="IPR005324">
    <property type="entry name" value="Ribosomal_uS5_C"/>
</dbReference>
<dbReference type="InterPro" id="IPR013810">
    <property type="entry name" value="Ribosomal_uS5_N"/>
</dbReference>
<dbReference type="InterPro" id="IPR018192">
    <property type="entry name" value="Ribosomal_uS5_N_CS"/>
</dbReference>
<dbReference type="InterPro" id="IPR014721">
    <property type="entry name" value="Ribsml_uS5_D2-typ_fold_subgr"/>
</dbReference>
<dbReference type="NCBIfam" id="TIGR01021">
    <property type="entry name" value="rpsE_bact"/>
    <property type="match status" value="1"/>
</dbReference>
<dbReference type="PANTHER" id="PTHR48277">
    <property type="entry name" value="MITOCHONDRIAL RIBOSOMAL PROTEIN S5"/>
    <property type="match status" value="1"/>
</dbReference>
<dbReference type="PANTHER" id="PTHR48277:SF1">
    <property type="entry name" value="MITOCHONDRIAL RIBOSOMAL PROTEIN S5"/>
    <property type="match status" value="1"/>
</dbReference>
<dbReference type="Pfam" id="PF00333">
    <property type="entry name" value="Ribosomal_S5"/>
    <property type="match status" value="1"/>
</dbReference>
<dbReference type="Pfam" id="PF03719">
    <property type="entry name" value="Ribosomal_S5_C"/>
    <property type="match status" value="1"/>
</dbReference>
<dbReference type="SUPFAM" id="SSF54768">
    <property type="entry name" value="dsRNA-binding domain-like"/>
    <property type="match status" value="1"/>
</dbReference>
<dbReference type="SUPFAM" id="SSF54211">
    <property type="entry name" value="Ribosomal protein S5 domain 2-like"/>
    <property type="match status" value="1"/>
</dbReference>
<dbReference type="PROSITE" id="PS00585">
    <property type="entry name" value="RIBOSOMAL_S5"/>
    <property type="match status" value="1"/>
</dbReference>
<dbReference type="PROSITE" id="PS50881">
    <property type="entry name" value="S5_DSRBD"/>
    <property type="match status" value="1"/>
</dbReference>
<protein>
    <recommendedName>
        <fullName evidence="1">Small ribosomal subunit protein uS5</fullName>
    </recommendedName>
    <alternativeName>
        <fullName evidence="3">30S ribosomal protein S5</fullName>
    </alternativeName>
</protein>
<feature type="chain" id="PRO_1000140876" description="Small ribosomal subunit protein uS5">
    <location>
        <begin position="1"/>
        <end position="192"/>
    </location>
</feature>
<feature type="domain" description="S5 DRBM" evidence="1">
    <location>
        <begin position="24"/>
        <end position="87"/>
    </location>
</feature>
<feature type="region of interest" description="Disordered" evidence="2">
    <location>
        <begin position="1"/>
        <end position="21"/>
    </location>
</feature>
<keyword id="KW-1185">Reference proteome</keyword>
<keyword id="KW-0687">Ribonucleoprotein</keyword>
<keyword id="KW-0689">Ribosomal protein</keyword>
<keyword id="KW-0694">RNA-binding</keyword>
<keyword id="KW-0699">rRNA-binding</keyword>
<name>RS5_AFIC5</name>
<gene>
    <name evidence="1" type="primary">rpsE</name>
    <name type="ordered locus">OCAR_5694</name>
    <name type="ordered locus">OCA5_c23130</name>
</gene>
<organism>
    <name type="scientific">Afipia carboxidovorans (strain ATCC 49405 / DSM 1227 / KCTC 32145 / OM5)</name>
    <name type="common">Oligotropha carboxidovorans</name>
    <dbReference type="NCBI Taxonomy" id="504832"/>
    <lineage>
        <taxon>Bacteria</taxon>
        <taxon>Pseudomonadati</taxon>
        <taxon>Pseudomonadota</taxon>
        <taxon>Alphaproteobacteria</taxon>
        <taxon>Hyphomicrobiales</taxon>
        <taxon>Nitrobacteraceae</taxon>
        <taxon>Afipia</taxon>
    </lineage>
</organism>
<accession>B6JEY2</accession>
<accession>F8BZB0</accession>
<proteinExistence type="inferred from homology"/>
<reference key="1">
    <citation type="journal article" date="2008" name="J. Bacteriol.">
        <title>Genome sequence of the chemolithoautotrophic bacterium Oligotropha carboxidovorans OM5T.</title>
        <authorList>
            <person name="Paul D."/>
            <person name="Bridges S."/>
            <person name="Burgess S.C."/>
            <person name="Dandass Y."/>
            <person name="Lawrence M.L."/>
        </authorList>
    </citation>
    <scope>NUCLEOTIDE SEQUENCE [LARGE SCALE GENOMIC DNA]</scope>
    <source>
        <strain>ATCC 49405 / DSM 1227 / KCTC 32145 / OM5</strain>
    </source>
</reference>
<reference key="2">
    <citation type="journal article" date="2011" name="J. Bacteriol.">
        <title>Complete genome sequences of the chemolithoautotrophic Oligotropha carboxidovorans strains OM4 and OM5.</title>
        <authorList>
            <person name="Volland S."/>
            <person name="Rachinger M."/>
            <person name="Strittmatter A."/>
            <person name="Daniel R."/>
            <person name="Gottschalk G."/>
            <person name="Meyer O."/>
        </authorList>
    </citation>
    <scope>NUCLEOTIDE SEQUENCE [LARGE SCALE GENOMIC DNA]</scope>
    <source>
        <strain>ATCC 49405 / DSM 1227 / KCTC 32145 / OM5</strain>
    </source>
</reference>
<evidence type="ECO:0000255" key="1">
    <source>
        <dbReference type="HAMAP-Rule" id="MF_01307"/>
    </source>
</evidence>
<evidence type="ECO:0000256" key="2">
    <source>
        <dbReference type="SAM" id="MobiDB-lite"/>
    </source>
</evidence>
<evidence type="ECO:0000305" key="3"/>
<sequence>MAAERERGGRERGGRDRDERDSEFVDKLVHINRVAKVVKGGKRFGFAALVVIGDQKGRVGFGHGKAREVPEAIRKATDSAKRNLTRVPLREGRTLHHDIAGRHGAGRVYLRAAPAGTGIIAGGPMRAVFETLGIQDVVAKSVGSSNPYNMIRATFDALKHQDSPRSVANRRNIKVSVLQARRVGGDAEASAD</sequence>